<organism>
    <name type="scientific">Homo sapiens</name>
    <name type="common">Human</name>
    <dbReference type="NCBI Taxonomy" id="9606"/>
    <lineage>
        <taxon>Eukaryota</taxon>
        <taxon>Metazoa</taxon>
        <taxon>Chordata</taxon>
        <taxon>Craniata</taxon>
        <taxon>Vertebrata</taxon>
        <taxon>Euteleostomi</taxon>
        <taxon>Mammalia</taxon>
        <taxon>Eutheria</taxon>
        <taxon>Euarchontoglires</taxon>
        <taxon>Primates</taxon>
        <taxon>Haplorrhini</taxon>
        <taxon>Catarrhini</taxon>
        <taxon>Hominidae</taxon>
        <taxon>Homo</taxon>
    </lineage>
</organism>
<sequence>MMLSCLFLLKALLALGSLESWITAGEHAKEGECPPHKNPCKELCQGDELCPAEQKCCTTGCGRICRDIPKGRKRDCPRVIRKQSCLKRCITDETCPGVKKCCTLGCNKSCVVPISKQKLAEFGGECPADPLPCEELCDGDASCPQGHKCCSTGCGRTCLGDIEGGRGGDCPKVLVGLCIVGCVMDENCQAGEKCCKSGCGRFCVPPVLPPKLTMNPNWTVRSDSELEIPVP</sequence>
<comment type="interaction">
    <interactant intactId="EBI-7963932">
        <id>Q8IUB2</id>
    </interactant>
    <interactant intactId="EBI-2515857">
        <id>O43681</id>
        <label>GET3</label>
    </interactant>
    <organismsDiffer>false</organismsDiffer>
    <experiments>3</experiments>
</comment>
<comment type="interaction">
    <interactant intactId="EBI-7963932">
        <id>Q8IUB2</id>
    </interactant>
    <interactant intactId="EBI-11958008">
        <id>Q5T754</id>
        <label>LCE1F</label>
    </interactant>
    <organismsDiffer>false</organismsDiffer>
    <experiments>3</experiments>
</comment>
<comment type="subcellular location">
    <subcellularLocation>
        <location evidence="3">Secreted</location>
    </subcellularLocation>
</comment>
<comment type="tissue specificity">
    <text>Ubiquitously expressed.</text>
</comment>
<comment type="sequence caution" evidence="3">
    <conflict type="erroneous initiation">
        <sequence resource="EMBL-CDS" id="AAI02014"/>
    </conflict>
</comment>
<comment type="sequence caution" evidence="3">
    <conflict type="erroneous initiation">
        <sequence resource="EMBL-CDS" id="AAI02015"/>
    </conflict>
</comment>
<protein>
    <recommendedName>
        <fullName>WAP four-disulfide core domain protein 3</fullName>
    </recommendedName>
    <alternativeName>
        <fullName>Putative protease inhibitor WAP14</fullName>
    </alternativeName>
</protein>
<proteinExistence type="evidence at protein level"/>
<dbReference type="EMBL" id="AF488306">
    <property type="protein sequence ID" value="AAN70993.1"/>
    <property type="molecule type" value="mRNA"/>
</dbReference>
<dbReference type="EMBL" id="AL050348">
    <property type="status" value="NOT_ANNOTATED_CDS"/>
    <property type="molecule type" value="Genomic_DNA"/>
</dbReference>
<dbReference type="EMBL" id="AL591713">
    <property type="protein sequence ID" value="CAC39444.1"/>
    <property type="molecule type" value="mRNA"/>
</dbReference>
<dbReference type="EMBL" id="BC102013">
    <property type="protein sequence ID" value="AAI02014.1"/>
    <property type="status" value="ALT_INIT"/>
    <property type="molecule type" value="mRNA"/>
</dbReference>
<dbReference type="EMBL" id="BC102014">
    <property type="protein sequence ID" value="AAI02015.1"/>
    <property type="status" value="ALT_INIT"/>
    <property type="molecule type" value="mRNA"/>
</dbReference>
<dbReference type="CCDS" id="CCDS33478.1"/>
<dbReference type="RefSeq" id="NP_542181.1">
    <property type="nucleotide sequence ID" value="NM_080614.2"/>
</dbReference>
<dbReference type="SMR" id="Q8IUB2"/>
<dbReference type="BioGRID" id="126649">
    <property type="interactions" value="5"/>
</dbReference>
<dbReference type="FunCoup" id="Q8IUB2">
    <property type="interactions" value="2"/>
</dbReference>
<dbReference type="IntAct" id="Q8IUB2">
    <property type="interactions" value="4"/>
</dbReference>
<dbReference type="MINT" id="Q8IUB2"/>
<dbReference type="STRING" id="9606.ENSP00000243938"/>
<dbReference type="MEROPS" id="I17.001"/>
<dbReference type="GlyCosmos" id="Q8IUB2">
    <property type="glycosylation" value="2 sites, No reported glycans"/>
</dbReference>
<dbReference type="GlyGen" id="Q8IUB2">
    <property type="glycosylation" value="2 sites"/>
</dbReference>
<dbReference type="BioMuta" id="WFDC3"/>
<dbReference type="DMDM" id="32363334"/>
<dbReference type="PaxDb" id="9606-ENSP00000243938"/>
<dbReference type="ProteomicsDB" id="70534"/>
<dbReference type="Antibodypedia" id="59149">
    <property type="antibodies" value="22 antibodies from 12 providers"/>
</dbReference>
<dbReference type="DNASU" id="140686"/>
<dbReference type="Ensembl" id="ENST00000243938.9">
    <property type="protein sequence ID" value="ENSP00000243938.4"/>
    <property type="gene ID" value="ENSG00000124116.19"/>
</dbReference>
<dbReference type="GeneID" id="140686"/>
<dbReference type="KEGG" id="hsa:140686"/>
<dbReference type="MANE-Select" id="ENST00000243938.9">
    <property type="protein sequence ID" value="ENSP00000243938.4"/>
    <property type="RefSeq nucleotide sequence ID" value="NM_080614.2"/>
    <property type="RefSeq protein sequence ID" value="NP_542181.1"/>
</dbReference>
<dbReference type="UCSC" id="uc002xpf.1">
    <property type="organism name" value="human"/>
</dbReference>
<dbReference type="AGR" id="HGNC:15957"/>
<dbReference type="CTD" id="140686"/>
<dbReference type="DisGeNET" id="140686"/>
<dbReference type="GeneCards" id="WFDC3"/>
<dbReference type="HGNC" id="HGNC:15957">
    <property type="gene designation" value="WFDC3"/>
</dbReference>
<dbReference type="HPA" id="ENSG00000124116">
    <property type="expression patterns" value="Group enriched (skin, testis)"/>
</dbReference>
<dbReference type="neXtProt" id="NX_Q8IUB2"/>
<dbReference type="OpenTargets" id="ENSG00000124116"/>
<dbReference type="PharmGKB" id="PA38067"/>
<dbReference type="VEuPathDB" id="HostDB:ENSG00000124116"/>
<dbReference type="eggNOG" id="ENOG502S9BM">
    <property type="taxonomic scope" value="Eukaryota"/>
</dbReference>
<dbReference type="GeneTree" id="ENSGT00730000111454"/>
<dbReference type="HOGENOM" id="CLU_105901_0_0_1"/>
<dbReference type="InParanoid" id="Q8IUB2"/>
<dbReference type="OMA" id="HVKAGEC"/>
<dbReference type="OrthoDB" id="4473401at2759"/>
<dbReference type="PAN-GO" id="Q8IUB2">
    <property type="GO annotations" value="4 GO annotations based on evolutionary models"/>
</dbReference>
<dbReference type="PhylomeDB" id="Q8IUB2"/>
<dbReference type="TreeFam" id="TF338375"/>
<dbReference type="PathwayCommons" id="Q8IUB2"/>
<dbReference type="SignaLink" id="Q8IUB2"/>
<dbReference type="BioGRID-ORCS" id="140686">
    <property type="hits" value="16 hits in 1141 CRISPR screens"/>
</dbReference>
<dbReference type="ChiTaRS" id="WFDC3">
    <property type="organism name" value="human"/>
</dbReference>
<dbReference type="GenomeRNAi" id="140686"/>
<dbReference type="Pharos" id="Q8IUB2">
    <property type="development level" value="Tdark"/>
</dbReference>
<dbReference type="PRO" id="PR:Q8IUB2"/>
<dbReference type="Proteomes" id="UP000005640">
    <property type="component" value="Chromosome 20"/>
</dbReference>
<dbReference type="RNAct" id="Q8IUB2">
    <property type="molecule type" value="protein"/>
</dbReference>
<dbReference type="Bgee" id="ENSG00000124116">
    <property type="expression patterns" value="Expressed in sperm and 121 other cell types or tissues"/>
</dbReference>
<dbReference type="ExpressionAtlas" id="Q8IUB2">
    <property type="expression patterns" value="baseline and differential"/>
</dbReference>
<dbReference type="GO" id="GO:0005615">
    <property type="term" value="C:extracellular space"/>
    <property type="evidence" value="ECO:0000318"/>
    <property type="project" value="GO_Central"/>
</dbReference>
<dbReference type="GO" id="GO:0004867">
    <property type="term" value="F:serine-type endopeptidase inhibitor activity"/>
    <property type="evidence" value="ECO:0000318"/>
    <property type="project" value="GO_Central"/>
</dbReference>
<dbReference type="GO" id="GO:0019731">
    <property type="term" value="P:antibacterial humoral response"/>
    <property type="evidence" value="ECO:0000318"/>
    <property type="project" value="GO_Central"/>
</dbReference>
<dbReference type="GO" id="GO:0045087">
    <property type="term" value="P:innate immune response"/>
    <property type="evidence" value="ECO:0000318"/>
    <property type="project" value="GO_Central"/>
</dbReference>
<dbReference type="Gene3D" id="4.10.75.10">
    <property type="entry name" value="Elafin-like"/>
    <property type="match status" value="4"/>
</dbReference>
<dbReference type="InterPro" id="IPR036645">
    <property type="entry name" value="Elafin-like_sf"/>
</dbReference>
<dbReference type="InterPro" id="IPR008197">
    <property type="entry name" value="WAP_dom"/>
</dbReference>
<dbReference type="InterPro" id="IPR050514">
    <property type="entry name" value="WAP_four-disulfide_core"/>
</dbReference>
<dbReference type="PANTHER" id="PTHR19441:SF97">
    <property type="entry name" value="WAP FOUR-DISULFIDE CORE DOMAIN PROTEIN 3"/>
    <property type="match status" value="1"/>
</dbReference>
<dbReference type="PANTHER" id="PTHR19441">
    <property type="entry name" value="WHEY ACDIC PROTEIN WAP"/>
    <property type="match status" value="1"/>
</dbReference>
<dbReference type="Pfam" id="PF00095">
    <property type="entry name" value="WAP"/>
    <property type="match status" value="4"/>
</dbReference>
<dbReference type="PRINTS" id="PR00003">
    <property type="entry name" value="4DISULPHCORE"/>
</dbReference>
<dbReference type="SMART" id="SM00217">
    <property type="entry name" value="WAP"/>
    <property type="match status" value="4"/>
</dbReference>
<dbReference type="SUPFAM" id="SSF57256">
    <property type="entry name" value="Elafin-like"/>
    <property type="match status" value="4"/>
</dbReference>
<dbReference type="PROSITE" id="PS51390">
    <property type="entry name" value="WAP"/>
    <property type="match status" value="4"/>
</dbReference>
<keyword id="KW-1015">Disulfide bond</keyword>
<keyword id="KW-0325">Glycoprotein</keyword>
<keyword id="KW-0646">Protease inhibitor</keyword>
<keyword id="KW-1185">Reference proteome</keyword>
<keyword id="KW-0677">Repeat</keyword>
<keyword id="KW-0964">Secreted</keyword>
<keyword id="KW-0722">Serine protease inhibitor</keyword>
<keyword id="KW-0732">Signal</keyword>
<name>WFDC3_HUMAN</name>
<accession>Q8IUB2</accession>
<accession>A6PVF2</accession>
<accession>Q0P6A5</accession>
<accession>Q3T1C5</accession>
<accession>Q8TC52</accession>
<accession>Q9BQP3</accession>
<accession>Q9BQP4</accession>
<feature type="signal peptide" evidence="1">
    <location>
        <begin position="1"/>
        <end position="24"/>
    </location>
</feature>
<feature type="chain" id="PRO_0000041381" description="WAP four-disulfide core domain protein 3">
    <location>
        <begin position="25"/>
        <end position="231"/>
    </location>
</feature>
<feature type="domain" description="WAP 1" evidence="2">
    <location>
        <begin position="26"/>
        <end position="68"/>
    </location>
</feature>
<feature type="domain" description="WAP 2" evidence="2">
    <location>
        <begin position="69"/>
        <end position="114"/>
    </location>
</feature>
<feature type="domain" description="WAP 3" evidence="2">
    <location>
        <begin position="119"/>
        <end position="162"/>
    </location>
</feature>
<feature type="domain" description="WAP 4" evidence="2">
    <location>
        <begin position="163"/>
        <end position="207"/>
    </location>
</feature>
<feature type="glycosylation site" description="N-linked (GlcNAc...) asparagine" evidence="1">
    <location>
        <position position="107"/>
    </location>
</feature>
<feature type="glycosylation site" description="N-linked (GlcNAc...) asparagine" evidence="1">
    <location>
        <position position="217"/>
    </location>
</feature>
<feature type="disulfide bond" evidence="2">
    <location>
        <begin position="33"/>
        <end position="57"/>
    </location>
</feature>
<feature type="disulfide bond" evidence="2">
    <location>
        <begin position="40"/>
        <end position="61"/>
    </location>
</feature>
<feature type="disulfide bond" evidence="2">
    <location>
        <begin position="44"/>
        <end position="56"/>
    </location>
</feature>
<feature type="disulfide bond" evidence="2">
    <location>
        <begin position="50"/>
        <end position="65"/>
    </location>
</feature>
<feature type="disulfide bond" evidence="2">
    <location>
        <begin position="76"/>
        <end position="102"/>
    </location>
</feature>
<feature type="disulfide bond" evidence="2">
    <location>
        <begin position="85"/>
        <end position="106"/>
    </location>
</feature>
<feature type="disulfide bond" evidence="2">
    <location>
        <begin position="89"/>
        <end position="101"/>
    </location>
</feature>
<feature type="disulfide bond" evidence="2">
    <location>
        <begin position="95"/>
        <end position="110"/>
    </location>
</feature>
<feature type="disulfide bond" evidence="2">
    <location>
        <begin position="126"/>
        <end position="150"/>
    </location>
</feature>
<feature type="disulfide bond" evidence="2">
    <location>
        <begin position="133"/>
        <end position="154"/>
    </location>
</feature>
<feature type="disulfide bond" evidence="2">
    <location>
        <begin position="137"/>
        <end position="149"/>
    </location>
</feature>
<feature type="disulfide bond" evidence="2">
    <location>
        <begin position="143"/>
        <end position="158"/>
    </location>
</feature>
<feature type="disulfide bond" evidence="2">
    <location>
        <begin position="170"/>
        <end position="195"/>
    </location>
</feature>
<feature type="disulfide bond" evidence="2">
    <location>
        <begin position="178"/>
        <end position="199"/>
    </location>
</feature>
<feature type="disulfide bond" evidence="2">
    <location>
        <begin position="182"/>
        <end position="194"/>
    </location>
</feature>
<feature type="disulfide bond" evidence="2">
    <location>
        <begin position="188"/>
        <end position="203"/>
    </location>
</feature>
<feature type="sequence variant" id="VAR_052951" description="In dbSNP:rs6032538.">
    <original>H</original>
    <variation>D</variation>
    <location>
        <position position="36"/>
    </location>
</feature>
<feature type="sequence variant" id="VAR_059962" description="In dbSNP:rs6073907.">
    <original>G</original>
    <variation>S</variation>
    <location>
        <position position="198"/>
    </location>
</feature>
<feature type="sequence conflict" description="In Ref. 3; CAC39444." evidence="3" ref="3">
    <original>LLK</original>
    <variation>IKE</variation>
    <location>
        <begin position="8"/>
        <end position="10"/>
    </location>
</feature>
<feature type="sequence conflict" description="In Ref. 4; AAI02014." evidence="3" ref="4">
    <original>EHA</original>
    <variation>RPS</variation>
    <location>
        <begin position="26"/>
        <end position="28"/>
    </location>
</feature>
<evidence type="ECO:0000255" key="1"/>
<evidence type="ECO:0000255" key="2">
    <source>
        <dbReference type="PROSITE-ProRule" id="PRU00722"/>
    </source>
</evidence>
<evidence type="ECO:0000305" key="3"/>
<reference key="1">
    <citation type="journal article" date="2002" name="Biochem. J.">
        <title>A locus on human chromosome 20 contains several genes expressing protease inhibitor domains with homology to whey acidic protein.</title>
        <authorList>
            <person name="Clauss A."/>
            <person name="Lilja H."/>
            <person name="Lundwall A."/>
        </authorList>
    </citation>
    <scope>NUCLEOTIDE SEQUENCE [MRNA]</scope>
</reference>
<reference key="2">
    <citation type="journal article" date="2001" name="Nature">
        <title>The DNA sequence and comparative analysis of human chromosome 20.</title>
        <authorList>
            <person name="Deloukas P."/>
            <person name="Matthews L.H."/>
            <person name="Ashurst J.L."/>
            <person name="Burton J."/>
            <person name="Gilbert J.G.R."/>
            <person name="Jones M."/>
            <person name="Stavrides G."/>
            <person name="Almeida J.P."/>
            <person name="Babbage A.K."/>
            <person name="Bagguley C.L."/>
            <person name="Bailey J."/>
            <person name="Barlow K.F."/>
            <person name="Bates K.N."/>
            <person name="Beard L.M."/>
            <person name="Beare D.M."/>
            <person name="Beasley O.P."/>
            <person name="Bird C.P."/>
            <person name="Blakey S.E."/>
            <person name="Bridgeman A.M."/>
            <person name="Brown A.J."/>
            <person name="Buck D."/>
            <person name="Burrill W.D."/>
            <person name="Butler A.P."/>
            <person name="Carder C."/>
            <person name="Carter N.P."/>
            <person name="Chapman J.C."/>
            <person name="Clamp M."/>
            <person name="Clark G."/>
            <person name="Clark L.N."/>
            <person name="Clark S.Y."/>
            <person name="Clee C.M."/>
            <person name="Clegg S."/>
            <person name="Cobley V.E."/>
            <person name="Collier R.E."/>
            <person name="Connor R.E."/>
            <person name="Corby N.R."/>
            <person name="Coulson A."/>
            <person name="Coville G.J."/>
            <person name="Deadman R."/>
            <person name="Dhami P.D."/>
            <person name="Dunn M."/>
            <person name="Ellington A.G."/>
            <person name="Frankland J.A."/>
            <person name="Fraser A."/>
            <person name="French L."/>
            <person name="Garner P."/>
            <person name="Grafham D.V."/>
            <person name="Griffiths C."/>
            <person name="Griffiths M.N.D."/>
            <person name="Gwilliam R."/>
            <person name="Hall R.E."/>
            <person name="Hammond S."/>
            <person name="Harley J.L."/>
            <person name="Heath P.D."/>
            <person name="Ho S."/>
            <person name="Holden J.L."/>
            <person name="Howden P.J."/>
            <person name="Huckle E."/>
            <person name="Hunt A.R."/>
            <person name="Hunt S.E."/>
            <person name="Jekosch K."/>
            <person name="Johnson C.M."/>
            <person name="Johnson D."/>
            <person name="Kay M.P."/>
            <person name="Kimberley A.M."/>
            <person name="King A."/>
            <person name="Knights A."/>
            <person name="Laird G.K."/>
            <person name="Lawlor S."/>
            <person name="Lehvaeslaiho M.H."/>
            <person name="Leversha M.A."/>
            <person name="Lloyd C."/>
            <person name="Lloyd D.M."/>
            <person name="Lovell J.D."/>
            <person name="Marsh V.L."/>
            <person name="Martin S.L."/>
            <person name="McConnachie L.J."/>
            <person name="McLay K."/>
            <person name="McMurray A.A."/>
            <person name="Milne S.A."/>
            <person name="Mistry D."/>
            <person name="Moore M.J.F."/>
            <person name="Mullikin J.C."/>
            <person name="Nickerson T."/>
            <person name="Oliver K."/>
            <person name="Parker A."/>
            <person name="Patel R."/>
            <person name="Pearce T.A.V."/>
            <person name="Peck A.I."/>
            <person name="Phillimore B.J.C.T."/>
            <person name="Prathalingam S.R."/>
            <person name="Plumb R.W."/>
            <person name="Ramsay H."/>
            <person name="Rice C.M."/>
            <person name="Ross M.T."/>
            <person name="Scott C.E."/>
            <person name="Sehra H.K."/>
            <person name="Shownkeen R."/>
            <person name="Sims S."/>
            <person name="Skuce C.D."/>
            <person name="Smith M.L."/>
            <person name="Soderlund C."/>
            <person name="Steward C.A."/>
            <person name="Sulston J.E."/>
            <person name="Swann R.M."/>
            <person name="Sycamore N."/>
            <person name="Taylor R."/>
            <person name="Tee L."/>
            <person name="Thomas D.W."/>
            <person name="Thorpe A."/>
            <person name="Tracey A."/>
            <person name="Tromans A.C."/>
            <person name="Vaudin M."/>
            <person name="Wall M."/>
            <person name="Wallis J.M."/>
            <person name="Whitehead S.L."/>
            <person name="Whittaker P."/>
            <person name="Willey D.L."/>
            <person name="Williams L."/>
            <person name="Williams S.A."/>
            <person name="Wilming L."/>
            <person name="Wray P.W."/>
            <person name="Hubbard T."/>
            <person name="Durbin R.M."/>
            <person name="Bentley D.R."/>
            <person name="Beck S."/>
            <person name="Rogers J."/>
        </authorList>
    </citation>
    <scope>NUCLEOTIDE SEQUENCE [LARGE SCALE GENOMIC DNA]</scope>
</reference>
<reference key="3">
    <citation type="submission" date="2001-05" db="EMBL/GenBank/DDBJ databases">
        <authorList>
            <person name="Stavrides G.S."/>
            <person name="Huckle E.J."/>
            <person name="Deloukas P."/>
        </authorList>
    </citation>
    <scope>NUCLEOTIDE SEQUENCE [MRNA] OF 8-231</scope>
</reference>
<reference key="4">
    <citation type="journal article" date="2004" name="Genome Res.">
        <title>The status, quality, and expansion of the NIH full-length cDNA project: the Mammalian Gene Collection (MGC).</title>
        <authorList>
            <consortium name="The MGC Project Team"/>
        </authorList>
    </citation>
    <scope>NUCLEOTIDE SEQUENCE [LARGE SCALE MRNA] OF 26-231</scope>
</reference>
<gene>
    <name type="primary">WFDC3</name>
    <name type="synonym">WAP14</name>
</gene>